<evidence type="ECO:0000255" key="1">
    <source>
        <dbReference type="HAMAP-Rule" id="MF_01220"/>
    </source>
</evidence>
<comment type="function">
    <text evidence="1">Catalyzes the reversible phosphorylation of UMP to UDP.</text>
</comment>
<comment type="catalytic activity">
    <reaction evidence="1">
        <text>UMP + ATP = UDP + ADP</text>
        <dbReference type="Rhea" id="RHEA:24400"/>
        <dbReference type="ChEBI" id="CHEBI:30616"/>
        <dbReference type="ChEBI" id="CHEBI:57865"/>
        <dbReference type="ChEBI" id="CHEBI:58223"/>
        <dbReference type="ChEBI" id="CHEBI:456216"/>
        <dbReference type="EC" id="2.7.4.22"/>
    </reaction>
</comment>
<comment type="activity regulation">
    <text evidence="1">Inhibited by UTP.</text>
</comment>
<comment type="pathway">
    <text evidence="1">Pyrimidine metabolism; CTP biosynthesis via de novo pathway; UDP from UMP (UMPK route): step 1/1.</text>
</comment>
<comment type="subunit">
    <text evidence="1">Homohexamer.</text>
</comment>
<comment type="subcellular location">
    <subcellularLocation>
        <location evidence="1">Cytoplasm</location>
    </subcellularLocation>
</comment>
<comment type="similarity">
    <text evidence="1">Belongs to the UMP kinase family.</text>
</comment>
<name>PYRH_METMA</name>
<keyword id="KW-0067">ATP-binding</keyword>
<keyword id="KW-0963">Cytoplasm</keyword>
<keyword id="KW-0418">Kinase</keyword>
<keyword id="KW-0547">Nucleotide-binding</keyword>
<keyword id="KW-0665">Pyrimidine biosynthesis</keyword>
<keyword id="KW-0808">Transferase</keyword>
<gene>
    <name evidence="1" type="primary">pyrH</name>
    <name type="ordered locus">MM_1611</name>
</gene>
<feature type="chain" id="PRO_0000143919" description="Uridylate kinase">
    <location>
        <begin position="1"/>
        <end position="233"/>
    </location>
</feature>
<feature type="binding site" evidence="1">
    <location>
        <begin position="9"/>
        <end position="10"/>
    </location>
    <ligand>
        <name>ATP</name>
        <dbReference type="ChEBI" id="CHEBI:30616"/>
    </ligand>
</feature>
<feature type="binding site" evidence="1">
    <location>
        <position position="43"/>
    </location>
    <ligand>
        <name>UMP</name>
        <dbReference type="ChEBI" id="CHEBI:57865"/>
    </ligand>
</feature>
<feature type="binding site" evidence="1">
    <location>
        <position position="44"/>
    </location>
    <ligand>
        <name>ATP</name>
        <dbReference type="ChEBI" id="CHEBI:30616"/>
    </ligand>
</feature>
<feature type="binding site" evidence="1">
    <location>
        <position position="48"/>
    </location>
    <ligand>
        <name>ATP</name>
        <dbReference type="ChEBI" id="CHEBI:30616"/>
    </ligand>
</feature>
<feature type="binding site" evidence="1">
    <location>
        <position position="65"/>
    </location>
    <ligand>
        <name>UMP</name>
        <dbReference type="ChEBI" id="CHEBI:57865"/>
    </ligand>
</feature>
<feature type="binding site" evidence="1">
    <location>
        <begin position="113"/>
        <end position="119"/>
    </location>
    <ligand>
        <name>UMP</name>
        <dbReference type="ChEBI" id="CHEBI:57865"/>
    </ligand>
</feature>
<feature type="binding site" evidence="1">
    <location>
        <position position="139"/>
    </location>
    <ligand>
        <name>ATP</name>
        <dbReference type="ChEBI" id="CHEBI:30616"/>
    </ligand>
</feature>
<feature type="binding site" evidence="1">
    <location>
        <position position="145"/>
    </location>
    <ligand>
        <name>ATP</name>
        <dbReference type="ChEBI" id="CHEBI:30616"/>
    </ligand>
</feature>
<feature type="binding site" evidence="1">
    <location>
        <position position="148"/>
    </location>
    <ligand>
        <name>ATP</name>
        <dbReference type="ChEBI" id="CHEBI:30616"/>
    </ligand>
</feature>
<organism>
    <name type="scientific">Methanosarcina mazei (strain ATCC BAA-159 / DSM 3647 / Goe1 / Go1 / JCM 11833 / OCM 88)</name>
    <name type="common">Methanosarcina frisia</name>
    <dbReference type="NCBI Taxonomy" id="192952"/>
    <lineage>
        <taxon>Archaea</taxon>
        <taxon>Methanobacteriati</taxon>
        <taxon>Methanobacteriota</taxon>
        <taxon>Stenosarchaea group</taxon>
        <taxon>Methanomicrobia</taxon>
        <taxon>Methanosarcinales</taxon>
        <taxon>Methanosarcinaceae</taxon>
        <taxon>Methanosarcina</taxon>
    </lineage>
</organism>
<accession>P59010</accession>
<sequence length="233" mass="24711">MLIVLSLGGSILAKNLDPDRFLKYANALRDISKKHTLLVVTGGGEAARDYIGAARAMGADEVTCDYIGIEITRLNARLLISALGHDAYPEIPSNYPEASKAMTSGKVVVMGGVTPGQTTDAVASILAEYLRADLLTIATSIDGVYSSDPNCDPCAVKYEKISPEKLINIVMAIEMKAGSKSPVDPVAAKIIERCKLDALVMDARNPDLLVEVICGEAAKKSPVSCGTWITAKK</sequence>
<dbReference type="EC" id="2.7.4.22" evidence="1"/>
<dbReference type="EMBL" id="AE008384">
    <property type="protein sequence ID" value="AAM31307.1"/>
    <property type="molecule type" value="Genomic_DNA"/>
</dbReference>
<dbReference type="RefSeq" id="WP_011033556.1">
    <property type="nucleotide sequence ID" value="NC_003901.1"/>
</dbReference>
<dbReference type="SMR" id="P59010"/>
<dbReference type="GeneID" id="82160666"/>
<dbReference type="KEGG" id="mma:MM_1611"/>
<dbReference type="PATRIC" id="fig|192952.21.peg.1864"/>
<dbReference type="eggNOG" id="arCOG00858">
    <property type="taxonomic scope" value="Archaea"/>
</dbReference>
<dbReference type="HOGENOM" id="CLU_079546_0_0_2"/>
<dbReference type="UniPathway" id="UPA00159">
    <property type="reaction ID" value="UER00275"/>
</dbReference>
<dbReference type="Proteomes" id="UP000000595">
    <property type="component" value="Chromosome"/>
</dbReference>
<dbReference type="GO" id="GO:0005737">
    <property type="term" value="C:cytoplasm"/>
    <property type="evidence" value="ECO:0007669"/>
    <property type="project" value="UniProtKB-SubCell"/>
</dbReference>
<dbReference type="GO" id="GO:0005524">
    <property type="term" value="F:ATP binding"/>
    <property type="evidence" value="ECO:0007669"/>
    <property type="project" value="UniProtKB-KW"/>
</dbReference>
<dbReference type="GO" id="GO:0033862">
    <property type="term" value="F:UMP kinase activity"/>
    <property type="evidence" value="ECO:0007669"/>
    <property type="project" value="UniProtKB-EC"/>
</dbReference>
<dbReference type="GO" id="GO:0044210">
    <property type="term" value="P:'de novo' CTP biosynthetic process"/>
    <property type="evidence" value="ECO:0007669"/>
    <property type="project" value="UniProtKB-UniRule"/>
</dbReference>
<dbReference type="GO" id="GO:0006225">
    <property type="term" value="P:UDP biosynthetic process"/>
    <property type="evidence" value="ECO:0007669"/>
    <property type="project" value="TreeGrafter"/>
</dbReference>
<dbReference type="CDD" id="cd04253">
    <property type="entry name" value="AAK_UMPK-PyrH-Pf"/>
    <property type="match status" value="1"/>
</dbReference>
<dbReference type="FunFam" id="3.40.1160.10:FF:000030">
    <property type="entry name" value="Uridylate kinase"/>
    <property type="match status" value="1"/>
</dbReference>
<dbReference type="Gene3D" id="3.40.1160.10">
    <property type="entry name" value="Acetylglutamate kinase-like"/>
    <property type="match status" value="1"/>
</dbReference>
<dbReference type="HAMAP" id="MF_01220_A">
    <property type="entry name" value="PyrH_A"/>
    <property type="match status" value="1"/>
</dbReference>
<dbReference type="InterPro" id="IPR036393">
    <property type="entry name" value="AceGlu_kinase-like_sf"/>
</dbReference>
<dbReference type="InterPro" id="IPR001048">
    <property type="entry name" value="Asp/Glu/Uridylate_kinase"/>
</dbReference>
<dbReference type="InterPro" id="IPR011817">
    <property type="entry name" value="Uridylate_kinase"/>
</dbReference>
<dbReference type="InterPro" id="IPR011818">
    <property type="entry name" value="Uridylate_kinase_arch/spir"/>
</dbReference>
<dbReference type="NCBIfam" id="TIGR02076">
    <property type="entry name" value="pyrH_arch"/>
    <property type="match status" value="1"/>
</dbReference>
<dbReference type="PANTHER" id="PTHR42833">
    <property type="entry name" value="URIDYLATE KINASE"/>
    <property type="match status" value="1"/>
</dbReference>
<dbReference type="PANTHER" id="PTHR42833:SF4">
    <property type="entry name" value="URIDYLATE KINASE PUMPKIN, CHLOROPLASTIC"/>
    <property type="match status" value="1"/>
</dbReference>
<dbReference type="Pfam" id="PF00696">
    <property type="entry name" value="AA_kinase"/>
    <property type="match status" value="1"/>
</dbReference>
<dbReference type="PIRSF" id="PIRSF005650">
    <property type="entry name" value="Uridylate_kin"/>
    <property type="match status" value="1"/>
</dbReference>
<dbReference type="SUPFAM" id="SSF53633">
    <property type="entry name" value="Carbamate kinase-like"/>
    <property type="match status" value="1"/>
</dbReference>
<reference key="1">
    <citation type="journal article" date="2002" name="J. Mol. Microbiol. Biotechnol.">
        <title>The genome of Methanosarcina mazei: evidence for lateral gene transfer between Bacteria and Archaea.</title>
        <authorList>
            <person name="Deppenmeier U."/>
            <person name="Johann A."/>
            <person name="Hartsch T."/>
            <person name="Merkl R."/>
            <person name="Schmitz R.A."/>
            <person name="Martinez-Arias R."/>
            <person name="Henne A."/>
            <person name="Wiezer A."/>
            <person name="Baeumer S."/>
            <person name="Jacobi C."/>
            <person name="Brueggemann H."/>
            <person name="Lienard T."/>
            <person name="Christmann A."/>
            <person name="Boemecke M."/>
            <person name="Steckel S."/>
            <person name="Bhattacharyya A."/>
            <person name="Lykidis A."/>
            <person name="Overbeek R."/>
            <person name="Klenk H.-P."/>
            <person name="Gunsalus R.P."/>
            <person name="Fritz H.-J."/>
            <person name="Gottschalk G."/>
        </authorList>
    </citation>
    <scope>NUCLEOTIDE SEQUENCE [LARGE SCALE GENOMIC DNA]</scope>
    <source>
        <strain>ATCC BAA-159 / DSM 3647 / Goe1 / Go1 / JCM 11833 / OCM 88</strain>
    </source>
</reference>
<proteinExistence type="inferred from homology"/>
<protein>
    <recommendedName>
        <fullName evidence="1">Uridylate kinase</fullName>
        <shortName evidence="1">UK</shortName>
        <ecNumber evidence="1">2.7.4.22</ecNumber>
    </recommendedName>
    <alternativeName>
        <fullName evidence="1">Uridine monophosphate kinase</fullName>
        <shortName evidence="1">UMP kinase</shortName>
        <shortName evidence="1">UMPK</shortName>
    </alternativeName>
</protein>